<reference key="1">
    <citation type="journal article" date="2009" name="Toxicon">
        <title>Cloning and characterization of cDNA sequences encoding for new venom peptides of the Brazilian scorpion Opisthacanthus cayaporum.</title>
        <authorList>
            <person name="Silva E.C."/>
            <person name="Camargos T.S."/>
            <person name="Maranhao A.Q."/>
            <person name="Silva-Pereira I."/>
            <person name="Silva L.P."/>
            <person name="Possani L.D."/>
            <person name="Schwartz E.F."/>
        </authorList>
    </citation>
    <scope>NUCLEOTIDE SEQUENCE [MRNA]</scope>
    <source>
        <tissue>Venom gland</tissue>
    </source>
</reference>
<reference key="2">
    <citation type="journal article" date="2011" name="Peptides">
        <title>The new kappa-KTx 2.5 from the scorpion Opisthacanthus cayaporum.</title>
        <authorList>
            <person name="Camargos T.S."/>
            <person name="Restano-Cassulini R."/>
            <person name="Possani L.D."/>
            <person name="Peigneur S."/>
            <person name="Tytgat J."/>
            <person name="Schwartz C.A."/>
            <person name="Alves E.M."/>
            <person name="de Freitas S.M."/>
            <person name="Schwartz E.F."/>
        </authorList>
    </citation>
    <scope>PROTEIN SEQUENCE OF 43-70</scope>
    <scope>FUNCTION</scope>
    <scope>SUBCELLULAR LOCATION</scope>
    <scope>SYNTHESIS OF 43-70</scope>
    <scope>DOMAIN</scope>
    <scope>CIRCULAR DICHROISM</scope>
    <scope>MASS SPECTROMETRY</scope>
    <source>
        <tissue>Venom</tissue>
    </source>
</reference>
<reference key="3">
    <citation type="journal article" date="2008" name="Toxicon">
        <title>Mass spectrometry analysis, amino acid sequence and biological activity of venom components from the Brazilian scorpion Opisthacanthus cayaporum.</title>
        <authorList>
            <person name="Schwartz E.F."/>
            <person name="Camargos T.S."/>
            <person name="Zamudio F.Z."/>
            <person name="Silva L.P."/>
            <person name="Bloch C. Jr."/>
            <person name="Caixeta F."/>
            <person name="Schwartz C.A."/>
            <person name="Possani L.D."/>
        </authorList>
    </citation>
    <scope>PROTEIN SEQUENCE OF 43-64</scope>
    <scope>SUBCELLULAR LOCATION</scope>
    <scope>IDENTIFICATION BY MASS SPECTROMETRY</scope>
    <source>
        <tissue>Venom</tissue>
    </source>
</reference>
<keyword id="KW-0903">Direct protein sequencing</keyword>
<keyword id="KW-1015">Disulfide bond</keyword>
<keyword id="KW-0872">Ion channel impairing toxin</keyword>
<keyword id="KW-0528">Neurotoxin</keyword>
<keyword id="KW-0632">Potassium channel impairing toxin</keyword>
<keyword id="KW-0964">Secreted</keyword>
<keyword id="KW-0732">Signal</keyword>
<keyword id="KW-0800">Toxin</keyword>
<keyword id="KW-1220">Voltage-gated potassium channel impairing toxin</keyword>
<name>KKX25_OPICY</name>
<protein>
    <recommendedName>
        <fullName evidence="6">Potassium channel toxin kappa-KTx 2.5</fullName>
    </recommendedName>
    <alternativeName>
        <fullName evidence="5">OcyC8</fullName>
    </alternativeName>
    <alternativeName>
        <fullName>OcyKTx6</fullName>
    </alternativeName>
</protein>
<proteinExistence type="evidence at protein level"/>
<dbReference type="EMBL" id="FM998750">
    <property type="protein sequence ID" value="CAX51396.1"/>
    <property type="molecule type" value="mRNA"/>
</dbReference>
<dbReference type="SMR" id="P86110"/>
<dbReference type="GO" id="GO:0005576">
    <property type="term" value="C:extracellular region"/>
    <property type="evidence" value="ECO:0007669"/>
    <property type="project" value="UniProtKB-SubCell"/>
</dbReference>
<dbReference type="GO" id="GO:0015459">
    <property type="term" value="F:potassium channel regulator activity"/>
    <property type="evidence" value="ECO:0007669"/>
    <property type="project" value="UniProtKB-KW"/>
</dbReference>
<dbReference type="GO" id="GO:0090729">
    <property type="term" value="F:toxin activity"/>
    <property type="evidence" value="ECO:0007669"/>
    <property type="project" value="UniProtKB-KW"/>
</dbReference>
<accession>P86110</accession>
<accession>C5J892</accession>
<evidence type="ECO:0000250" key="1">
    <source>
        <dbReference type="UniProtKB" id="P0C1Z3"/>
    </source>
</evidence>
<evidence type="ECO:0000255" key="2"/>
<evidence type="ECO:0000269" key="3">
    <source>
    </source>
</evidence>
<evidence type="ECO:0000269" key="4">
    <source>
    </source>
</evidence>
<evidence type="ECO:0000303" key="5">
    <source>
    </source>
</evidence>
<evidence type="ECO:0000303" key="6">
    <source>
    </source>
</evidence>
<evidence type="ECO:0000305" key="7"/>
<evidence type="ECO:0000305" key="8">
    <source>
    </source>
</evidence>
<evidence type="ECO:0000305" key="9">
    <source>
    </source>
</evidence>
<organism>
    <name type="scientific">Opisthacanthus cayaporum</name>
    <name type="common">South American scorpion</name>
    <dbReference type="NCBI Taxonomy" id="573324"/>
    <lineage>
        <taxon>Eukaryota</taxon>
        <taxon>Metazoa</taxon>
        <taxon>Ecdysozoa</taxon>
        <taxon>Arthropoda</taxon>
        <taxon>Chelicerata</taxon>
        <taxon>Arachnida</taxon>
        <taxon>Scorpiones</taxon>
        <taxon>Iurida</taxon>
        <taxon>Scorpionoidea</taxon>
        <taxon>Hemiscorpiidae</taxon>
        <taxon>Opisthacanthus</taxon>
    </lineage>
</organism>
<feature type="signal peptide" evidence="2">
    <location>
        <begin position="1"/>
        <end position="26"/>
    </location>
</feature>
<feature type="propeptide" id="PRO_0000398603" evidence="3 4">
    <location>
        <begin position="27"/>
        <end position="42"/>
    </location>
</feature>
<feature type="peptide" id="PRO_0000398136" description="Potassium channel toxin kappa-KTx 2.5" evidence="6">
    <location>
        <begin position="43"/>
        <end position="70"/>
    </location>
</feature>
<feature type="disulfide bond" evidence="1">
    <location>
        <begin position="46"/>
        <end position="64"/>
    </location>
</feature>
<feature type="disulfide bond" evidence="1">
    <location>
        <begin position="50"/>
        <end position="60"/>
    </location>
</feature>
<feature type="sequence conflict" description="In Ref. 3; AA sequence." evidence="7" ref="3">
    <original>H</original>
    <variation>N</variation>
    <location>
        <position position="53"/>
    </location>
</feature>
<sequence>MESSRKSYVLMLFLAFVIMNVCSVSGEPKDGEIAGFEMEEARYDACVNACLEHHPNVRECEEACKNPVPP</sequence>
<comment type="function">
    <text evidence="4">Voltage-independently blocks potassium currents on hKv1.1/KCNA1 (IC(50)=217 uM), and hKv1.4/KCNA4 (IC(50)=71 uM) (expressed in CHO cells).</text>
</comment>
<comment type="subcellular location">
    <subcellularLocation>
        <location evidence="3 4">Secreted</location>
    </subcellularLocation>
</comment>
<comment type="tissue specificity">
    <text evidence="8 9">Expressed by the venom gland.</text>
</comment>
<comment type="domain">
    <text evidence="1">Has the structural arrangement of two alpha-helices stabilized by disulfide bonds (CSalpha/alpha 2(S-S)).</text>
</comment>
<comment type="mass spectrometry">
    <text>Monoisotopic mass.</text>
</comment>
<comment type="miscellaneous">
    <text evidence="9">Negative results: has no effect on other potassium channels, on sodium channels, on bacterial growth and on smooth muscle tissue (a known assay to identify possible bradykinin-potentiating peptides).</text>
</comment>
<comment type="similarity">
    <text evidence="7">Belongs to the short scorpion toxin superfamily. Potassium channel inhibitor kappa-KTx family. Kappa-KTx 2 subfamily.</text>
</comment>